<name>HPND_RHOPA</name>
<evidence type="ECO:0000269" key="1">
    <source>
    </source>
</evidence>
<evidence type="ECO:0000303" key="2">
    <source>
    </source>
</evidence>
<evidence type="ECO:0000305" key="3"/>
<evidence type="ECO:0000312" key="4">
    <source>
        <dbReference type="EMBL" id="CAE29183.1"/>
    </source>
</evidence>
<comment type="function">
    <text evidence="1">Involved in the biosynthesis of the hopanoid precursor squalene (SQ) from farnesyl diphosphate (FPP). Catalyzes the first step, the formation of presqualene diphosphate (PSPP) from two molecules of FPP.</text>
</comment>
<comment type="catalytic activity">
    <reaction evidence="1">
        <text>2 (2E,6E)-farnesyl diphosphate = presqualene diphosphate + diphosphate</text>
        <dbReference type="Rhea" id="RHEA:22672"/>
        <dbReference type="ChEBI" id="CHEBI:33019"/>
        <dbReference type="ChEBI" id="CHEBI:57310"/>
        <dbReference type="ChEBI" id="CHEBI:175763"/>
        <dbReference type="EC" id="2.5.1.103"/>
    </reaction>
</comment>
<comment type="pathway">
    <text evidence="1">Secondary metabolite biosynthesis; hopanoid biosynthesis.</text>
</comment>
<comment type="similarity">
    <text evidence="3">Belongs to the phytoene/squalene synthase family. HpnD subfamily.</text>
</comment>
<keyword id="KW-0808">Transferase</keyword>
<organism>
    <name type="scientific">Rhodopseudomonas palustris (strain ATCC BAA-98 / CGA009)</name>
    <dbReference type="NCBI Taxonomy" id="258594"/>
    <lineage>
        <taxon>Bacteria</taxon>
        <taxon>Pseudomonadati</taxon>
        <taxon>Pseudomonadota</taxon>
        <taxon>Alphaproteobacteria</taxon>
        <taxon>Hyphomicrobiales</taxon>
        <taxon>Nitrobacteraceae</taxon>
        <taxon>Rhodopseudomonas</taxon>
    </lineage>
</organism>
<accession>Q6N3F2</accession>
<dbReference type="EC" id="2.5.1.103" evidence="1"/>
<dbReference type="EMBL" id="BX572605">
    <property type="protein sequence ID" value="CAE29183.1"/>
    <property type="molecule type" value="Genomic_DNA"/>
</dbReference>
<dbReference type="RefSeq" id="WP_011159280.1">
    <property type="nucleotide sequence ID" value="NZ_CP116810.1"/>
</dbReference>
<dbReference type="SMR" id="Q6N3F2"/>
<dbReference type="STRING" id="258594.RPA3742"/>
<dbReference type="DNASU" id="2692931"/>
<dbReference type="GeneID" id="66894848"/>
<dbReference type="eggNOG" id="COG1562">
    <property type="taxonomic scope" value="Bacteria"/>
</dbReference>
<dbReference type="HOGENOM" id="CLU_037269_1_1_5"/>
<dbReference type="PhylomeDB" id="Q6N3F2"/>
<dbReference type="UniPathway" id="UPA00337"/>
<dbReference type="GO" id="GO:0004311">
    <property type="term" value="F:geranylgeranyl diphosphate synthase activity"/>
    <property type="evidence" value="ECO:0007669"/>
    <property type="project" value="InterPro"/>
</dbReference>
<dbReference type="GO" id="GO:0051996">
    <property type="term" value="F:squalene synthase [NAD(P)H] activity"/>
    <property type="evidence" value="ECO:0007669"/>
    <property type="project" value="InterPro"/>
</dbReference>
<dbReference type="GO" id="GO:0016117">
    <property type="term" value="P:carotenoid biosynthetic process"/>
    <property type="evidence" value="ECO:0007669"/>
    <property type="project" value="InterPro"/>
</dbReference>
<dbReference type="CDD" id="cd00683">
    <property type="entry name" value="Trans_IPPS_HH"/>
    <property type="match status" value="1"/>
</dbReference>
<dbReference type="Gene3D" id="1.10.600.10">
    <property type="entry name" value="Farnesyl Diphosphate Synthase"/>
    <property type="match status" value="1"/>
</dbReference>
<dbReference type="InterPro" id="IPR008949">
    <property type="entry name" value="Isoprenoid_synthase_dom_sf"/>
</dbReference>
<dbReference type="InterPro" id="IPR017828">
    <property type="entry name" value="SQ_synth_HpnD-like"/>
</dbReference>
<dbReference type="InterPro" id="IPR002060">
    <property type="entry name" value="Squ/phyt_synthse"/>
</dbReference>
<dbReference type="InterPro" id="IPR019845">
    <property type="entry name" value="Squalene/phytoene_synthase_CS"/>
</dbReference>
<dbReference type="InterPro" id="IPR044843">
    <property type="entry name" value="Trans_IPPS_bact-type"/>
</dbReference>
<dbReference type="InterPro" id="IPR033904">
    <property type="entry name" value="Trans_IPPS_HH"/>
</dbReference>
<dbReference type="NCBIfam" id="TIGR03465">
    <property type="entry name" value="HpnD"/>
    <property type="match status" value="1"/>
</dbReference>
<dbReference type="PANTHER" id="PTHR31480">
    <property type="entry name" value="BIFUNCTIONAL LYCOPENE CYCLASE/PHYTOENE SYNTHASE"/>
    <property type="match status" value="1"/>
</dbReference>
<dbReference type="Pfam" id="PF00494">
    <property type="entry name" value="SQS_PSY"/>
    <property type="match status" value="1"/>
</dbReference>
<dbReference type="SFLD" id="SFLDS00005">
    <property type="entry name" value="Isoprenoid_Synthase_Type_I"/>
    <property type="match status" value="1"/>
</dbReference>
<dbReference type="SFLD" id="SFLDG01212">
    <property type="entry name" value="Phytoene_synthase_like"/>
    <property type="match status" value="1"/>
</dbReference>
<dbReference type="SUPFAM" id="SSF48576">
    <property type="entry name" value="Terpenoid synthases"/>
    <property type="match status" value="1"/>
</dbReference>
<dbReference type="PROSITE" id="PS01044">
    <property type="entry name" value="SQUALEN_PHYTOEN_SYN_1"/>
    <property type="match status" value="1"/>
</dbReference>
<dbReference type="PROSITE" id="PS01045">
    <property type="entry name" value="SQUALEN_PHYTOEN_SYN_2"/>
    <property type="match status" value="1"/>
</dbReference>
<reference key="1">
    <citation type="journal article" date="2004" name="Nat. Biotechnol.">
        <title>Complete genome sequence of the metabolically versatile photosynthetic bacterium Rhodopseudomonas palustris.</title>
        <authorList>
            <person name="Larimer F.W."/>
            <person name="Chain P."/>
            <person name="Hauser L."/>
            <person name="Lamerdin J.E."/>
            <person name="Malfatti S."/>
            <person name="Do L."/>
            <person name="Land M.L."/>
            <person name="Pelletier D.A."/>
            <person name="Beatty J.T."/>
            <person name="Lang A.S."/>
            <person name="Tabita F.R."/>
            <person name="Gibson J.L."/>
            <person name="Hanson T.E."/>
            <person name="Bobst C."/>
            <person name="Torres y Torres J.L."/>
            <person name="Peres C."/>
            <person name="Harrison F.H."/>
            <person name="Gibson J."/>
            <person name="Harwood C.S."/>
        </authorList>
    </citation>
    <scope>NUCLEOTIDE SEQUENCE [LARGE SCALE GENOMIC DNA]</scope>
    <source>
        <strain>ATCC BAA-98 / CGA009</strain>
    </source>
</reference>
<reference key="2">
    <citation type="journal article" date="2015" name="ACS Cent. Sci.">
        <title>Biosynthesis of squalene from farnesyl diphosphate in bacteria: three steps catalyzed by three enzymes.</title>
        <authorList>
            <person name="Pan J.J."/>
            <person name="Solbiati J.O."/>
            <person name="Ramamoorthy G."/>
            <person name="Hillerich B.S."/>
            <person name="Seidel R.D."/>
            <person name="Cronan J.E."/>
            <person name="Almo S.C."/>
            <person name="Poulter C.D."/>
        </authorList>
    </citation>
    <scope>FUNCTION</scope>
    <scope>CATALYTIC ACTIVITY</scope>
    <scope>PATHWAY</scope>
    <source>
        <strain>BisB5</strain>
    </source>
</reference>
<gene>
    <name evidence="2" type="primary">hpnD</name>
    <name evidence="4" type="ordered locus">RPA3742</name>
</gene>
<feature type="chain" id="PRO_0000441693" description="Presqualene diphosphate synthase">
    <location>
        <begin position="1"/>
        <end position="279"/>
    </location>
</feature>
<sequence length="279" mass="30906">MTVHATPEPAAHQGVALGSSFYAAMRILPRPQREAMFQVYSFCRFVDDIADSDRPREQRVAELQQWRDDIAALYRGAPPPRLADYQESLRTFGLKREDFEAIIDGMEMDVDADIRAPDEATLDLYCDRVASAVGRLSVRIFGLPEADGIELSHHLGRALQLTNILRDIDEDAGIGRLYLPSELLHKVGITATDPRVVAADSALPSVCAPLVERALAHFAAADKVMNRNPRRVVKAPRIMGKYYYSILQLLIARGFAAPRAPVKLGKASKIAILLQYAIV</sequence>
<protein>
    <recommendedName>
        <fullName evidence="2">Presqualene diphosphate synthase</fullName>
        <shortName evidence="2">PSPP synthase</shortName>
        <shortName evidence="2">PSPPase</shortName>
        <ecNumber evidence="1">2.5.1.103</ecNumber>
    </recommendedName>
</protein>
<proteinExistence type="evidence at protein level"/>